<protein>
    <recommendedName>
        <fullName>Mitochondrial intermediate peptidase</fullName>
        <shortName>MIP</shortName>
        <ecNumber>3.4.24.59</ecNumber>
    </recommendedName>
    <alternativeName>
        <fullName>Octapeptidyl aminopeptidase</fullName>
    </alternativeName>
</protein>
<reference key="1">
    <citation type="journal article" date="2006" name="Nature">
        <title>Insights from the genome of the biotrophic fungal plant pathogen Ustilago maydis.</title>
        <authorList>
            <person name="Kaemper J."/>
            <person name="Kahmann R."/>
            <person name="Boelker M."/>
            <person name="Ma L.-J."/>
            <person name="Brefort T."/>
            <person name="Saville B.J."/>
            <person name="Banuett F."/>
            <person name="Kronstad J.W."/>
            <person name="Gold S.E."/>
            <person name="Mueller O."/>
            <person name="Perlin M.H."/>
            <person name="Woesten H.A.B."/>
            <person name="de Vries R."/>
            <person name="Ruiz-Herrera J."/>
            <person name="Reynaga-Pena C.G."/>
            <person name="Snetselaar K."/>
            <person name="McCann M."/>
            <person name="Perez-Martin J."/>
            <person name="Feldbruegge M."/>
            <person name="Basse C.W."/>
            <person name="Steinberg G."/>
            <person name="Ibeas J.I."/>
            <person name="Holloman W."/>
            <person name="Guzman P."/>
            <person name="Farman M.L."/>
            <person name="Stajich J.E."/>
            <person name="Sentandreu R."/>
            <person name="Gonzalez-Prieto J.M."/>
            <person name="Kennell J.C."/>
            <person name="Molina L."/>
            <person name="Schirawski J."/>
            <person name="Mendoza-Mendoza A."/>
            <person name="Greilinger D."/>
            <person name="Muench K."/>
            <person name="Roessel N."/>
            <person name="Scherer M."/>
            <person name="Vranes M."/>
            <person name="Ladendorf O."/>
            <person name="Vincon V."/>
            <person name="Fuchs U."/>
            <person name="Sandrock B."/>
            <person name="Meng S."/>
            <person name="Ho E.C.H."/>
            <person name="Cahill M.J."/>
            <person name="Boyce K.J."/>
            <person name="Klose J."/>
            <person name="Klosterman S.J."/>
            <person name="Deelstra H.J."/>
            <person name="Ortiz-Castellanos L."/>
            <person name="Li W."/>
            <person name="Sanchez-Alonso P."/>
            <person name="Schreier P.H."/>
            <person name="Haeuser-Hahn I."/>
            <person name="Vaupel M."/>
            <person name="Koopmann E."/>
            <person name="Friedrich G."/>
            <person name="Voss H."/>
            <person name="Schlueter T."/>
            <person name="Margolis J."/>
            <person name="Platt D."/>
            <person name="Swimmer C."/>
            <person name="Gnirke A."/>
            <person name="Chen F."/>
            <person name="Vysotskaia V."/>
            <person name="Mannhaupt G."/>
            <person name="Gueldener U."/>
            <person name="Muensterkoetter M."/>
            <person name="Haase D."/>
            <person name="Oesterheld M."/>
            <person name="Mewes H.-W."/>
            <person name="Mauceli E.W."/>
            <person name="DeCaprio D."/>
            <person name="Wade C.M."/>
            <person name="Butler J."/>
            <person name="Young S.K."/>
            <person name="Jaffe D.B."/>
            <person name="Calvo S.E."/>
            <person name="Nusbaum C."/>
            <person name="Galagan J.E."/>
            <person name="Birren B.W."/>
        </authorList>
    </citation>
    <scope>NUCLEOTIDE SEQUENCE [LARGE SCALE GENOMIC DNA]</scope>
    <source>
        <strain>DSM 14603 / FGSC 9021 / UM521</strain>
    </source>
</reference>
<reference key="2">
    <citation type="submission" date="2014-09" db="EMBL/GenBank/DDBJ databases">
        <authorList>
            <person name="Gueldener U."/>
            <person name="Muensterkoetter M."/>
            <person name="Walter M.C."/>
            <person name="Mannhaupt G."/>
            <person name="Kahmann R."/>
        </authorList>
    </citation>
    <scope>GENOME REANNOTATION</scope>
    <source>
        <strain>DSM 14603 / FGSC 9021 / UM521</strain>
    </source>
</reference>
<sequence length="889" mass="97799">MASTSKNAQRAAASVAHSYHVCLARRMSRLPTLLSNISAPAASKALDRYESKRIHSRSFSSSLAAQRVQRPTSAGPILTNPISDHEKDNDELRSLFDAPPTSSSANHLRSSGPSTGLFEIPSLTSPQNFLVLAQQTLARAQLLVDRIDRAGSADASTAQGIKELKEVVRNLDRLSDLLCGVIDMAELVRNAHPDPEWAEAANAAYEYLCGYMNVLNTHTGLYSVLKNILSIKEVAETLSKEATAVAQVFLRDFEKSGIHLPPAERERFVQLSDEILVLGRGFLQDIAGNDASDDFARIASAQADADKSDMVGLPTHWLEDVNPTILKAVRASAITDTDGLLTFSAADQPWVFQTLLKYAPDERARKVAFRAANYGSQAQVQRLERLLKARAELATLTGASSYAEMALGDKMAKEPQNVEEFLRALTKHHRPRASHDLDKLRRLKHNATVSEPAQNTRQSTFNTNSTLPEFAPWDRDMYTEQHFRSASLSNVQPLSPYLSVGSVFAGLSRLFSALYGIRFRASMVAPGEVWSEGAGDVMKVEVLDESEGARGTSGSAEGLIGTIYADLWSREGKPGGAAHYTVRCSRRVDKDDEAGDFTYGRAEDGRVVRPQDLGGEGCGNPLQAPTFEQRERPGRYQLPVVVLMCDFARPGNANQGPCLLGWHEVETLFHEMGHAIHSMIGRTSYHNVSGTRCATDFVELPSILMEHFVSSPQVVHLLARHHSTGASLPFEHLSSHLAASKSLEGLDTYHQILLARLDQLYHSQLAASPSFSSTTTYSDLDRQMHLPGAPNLSYTEGAHPQVRFGHLFGYGSTYYSYLLDRVIASKVWNHLFANNPLDRYAGQVFKNQCLKYGGGKDPWHILADVLNEDSVRQGDSRAMQQVGKWGIEC</sequence>
<feature type="transit peptide" description="Mitochondrion" evidence="2">
    <location>
        <begin position="1"/>
        <end position="30"/>
    </location>
</feature>
<feature type="chain" id="PRO_0000338595" description="Mitochondrial intermediate peptidase">
    <location>
        <begin position="31"/>
        <end position="889"/>
    </location>
</feature>
<feature type="region of interest" description="Disordered" evidence="4">
    <location>
        <begin position="60"/>
        <end position="112"/>
    </location>
</feature>
<feature type="compositionally biased region" description="Basic and acidic residues" evidence="4">
    <location>
        <begin position="83"/>
        <end position="94"/>
    </location>
</feature>
<feature type="compositionally biased region" description="Polar residues" evidence="4">
    <location>
        <begin position="100"/>
        <end position="112"/>
    </location>
</feature>
<feature type="active site" evidence="3">
    <location>
        <position position="671"/>
    </location>
</feature>
<feature type="binding site" evidence="3">
    <location>
        <position position="670"/>
    </location>
    <ligand>
        <name>Zn(2+)</name>
        <dbReference type="ChEBI" id="CHEBI:29105"/>
        <note>catalytic</note>
    </ligand>
</feature>
<feature type="binding site" evidence="3">
    <location>
        <position position="674"/>
    </location>
    <ligand>
        <name>Zn(2+)</name>
        <dbReference type="ChEBI" id="CHEBI:29105"/>
        <note>catalytic</note>
    </ligand>
</feature>
<feature type="binding site" evidence="3">
    <location>
        <position position="677"/>
    </location>
    <ligand>
        <name>Zn(2+)</name>
        <dbReference type="ChEBI" id="CHEBI:29105"/>
        <note>catalytic</note>
    </ligand>
</feature>
<evidence type="ECO:0000250" key="1"/>
<evidence type="ECO:0000255" key="2"/>
<evidence type="ECO:0000255" key="3">
    <source>
        <dbReference type="PROSITE-ProRule" id="PRU10095"/>
    </source>
</evidence>
<evidence type="ECO:0000256" key="4">
    <source>
        <dbReference type="SAM" id="MobiDB-lite"/>
    </source>
</evidence>
<evidence type="ECO:0000305" key="5"/>
<gene>
    <name type="primary">OCT1</name>
    <name type="ORF">UMAG_02435</name>
</gene>
<keyword id="KW-0378">Hydrolase</keyword>
<keyword id="KW-0479">Metal-binding</keyword>
<keyword id="KW-0482">Metalloprotease</keyword>
<keyword id="KW-0496">Mitochondrion</keyword>
<keyword id="KW-0645">Protease</keyword>
<keyword id="KW-1185">Reference proteome</keyword>
<keyword id="KW-0809">Transit peptide</keyword>
<keyword id="KW-0862">Zinc</keyword>
<proteinExistence type="inferred from homology"/>
<dbReference type="EC" id="3.4.24.59"/>
<dbReference type="EMBL" id="CM003144">
    <property type="protein sequence ID" value="KIS69921.1"/>
    <property type="molecule type" value="Genomic_DNA"/>
</dbReference>
<dbReference type="RefSeq" id="XP_011388723.1">
    <property type="nucleotide sequence ID" value="XM_011390421.1"/>
</dbReference>
<dbReference type="SMR" id="Q4PBS8"/>
<dbReference type="FunCoup" id="Q4PBS8">
    <property type="interactions" value="314"/>
</dbReference>
<dbReference type="STRING" id="237631.Q4PBS8"/>
<dbReference type="EnsemblFungi" id="KIS69921">
    <property type="protein sequence ID" value="KIS69921"/>
    <property type="gene ID" value="UMAG_02435"/>
</dbReference>
<dbReference type="GeneID" id="23563181"/>
<dbReference type="KEGG" id="uma:UMAG_02435"/>
<dbReference type="VEuPathDB" id="FungiDB:UMAG_02435"/>
<dbReference type="eggNOG" id="KOG2090">
    <property type="taxonomic scope" value="Eukaryota"/>
</dbReference>
<dbReference type="InParanoid" id="Q4PBS8"/>
<dbReference type="OMA" id="ALMFEYM"/>
<dbReference type="OrthoDB" id="17530at2759"/>
<dbReference type="Proteomes" id="UP000000561">
    <property type="component" value="Chromosome 5"/>
</dbReference>
<dbReference type="GO" id="GO:0005759">
    <property type="term" value="C:mitochondrial matrix"/>
    <property type="evidence" value="ECO:0007669"/>
    <property type="project" value="UniProtKB-SubCell"/>
</dbReference>
<dbReference type="GO" id="GO:0005739">
    <property type="term" value="C:mitochondrion"/>
    <property type="evidence" value="ECO:0000318"/>
    <property type="project" value="GO_Central"/>
</dbReference>
<dbReference type="GO" id="GO:0046872">
    <property type="term" value="F:metal ion binding"/>
    <property type="evidence" value="ECO:0007669"/>
    <property type="project" value="UniProtKB-KW"/>
</dbReference>
<dbReference type="GO" id="GO:0004222">
    <property type="term" value="F:metalloendopeptidase activity"/>
    <property type="evidence" value="ECO:0000318"/>
    <property type="project" value="GO_Central"/>
</dbReference>
<dbReference type="GO" id="GO:0006518">
    <property type="term" value="P:peptide metabolic process"/>
    <property type="evidence" value="ECO:0000318"/>
    <property type="project" value="GO_Central"/>
</dbReference>
<dbReference type="GO" id="GO:0006627">
    <property type="term" value="P:protein processing involved in protein targeting to mitochondrion"/>
    <property type="evidence" value="ECO:0000318"/>
    <property type="project" value="GO_Central"/>
</dbReference>
<dbReference type="CDD" id="cd06457">
    <property type="entry name" value="M3A_MIP"/>
    <property type="match status" value="1"/>
</dbReference>
<dbReference type="FunFam" id="1.10.1370.10:FF:000022">
    <property type="entry name" value="Mitochondrial intermediate peptidase"/>
    <property type="match status" value="1"/>
</dbReference>
<dbReference type="FunFam" id="3.40.390.10:FF:000055">
    <property type="entry name" value="Related to mitochondrial intermediate peptidase"/>
    <property type="match status" value="1"/>
</dbReference>
<dbReference type="FunFam" id="3.40.390.10:FF:000061">
    <property type="entry name" value="Related to mitochondrial intermediate peptidase"/>
    <property type="match status" value="1"/>
</dbReference>
<dbReference type="Gene3D" id="3.40.390.10">
    <property type="entry name" value="Collagenase (Catalytic Domain)"/>
    <property type="match status" value="1"/>
</dbReference>
<dbReference type="Gene3D" id="1.10.1370.10">
    <property type="entry name" value="Neurolysin, domain 3"/>
    <property type="match status" value="1"/>
</dbReference>
<dbReference type="InterPro" id="IPR033851">
    <property type="entry name" value="M3A_MIP"/>
</dbReference>
<dbReference type="InterPro" id="IPR024079">
    <property type="entry name" value="MetalloPept_cat_dom_sf"/>
</dbReference>
<dbReference type="InterPro" id="IPR024077">
    <property type="entry name" value="Neurolysin/TOP_dom2"/>
</dbReference>
<dbReference type="InterPro" id="IPR045090">
    <property type="entry name" value="Pept_M3A_M3B"/>
</dbReference>
<dbReference type="InterPro" id="IPR001567">
    <property type="entry name" value="Pept_M3A_M3B_dom"/>
</dbReference>
<dbReference type="PANTHER" id="PTHR11804:SF79">
    <property type="entry name" value="MITOCHONDRIAL INTERMEDIATE PEPTIDASE"/>
    <property type="match status" value="1"/>
</dbReference>
<dbReference type="PANTHER" id="PTHR11804">
    <property type="entry name" value="PROTEASE M3 THIMET OLIGOPEPTIDASE-RELATED"/>
    <property type="match status" value="1"/>
</dbReference>
<dbReference type="Pfam" id="PF01432">
    <property type="entry name" value="Peptidase_M3"/>
    <property type="match status" value="1"/>
</dbReference>
<dbReference type="SUPFAM" id="SSF55486">
    <property type="entry name" value="Metalloproteases ('zincins'), catalytic domain"/>
    <property type="match status" value="1"/>
</dbReference>
<dbReference type="PROSITE" id="PS00142">
    <property type="entry name" value="ZINC_PROTEASE"/>
    <property type="match status" value="1"/>
</dbReference>
<name>PMIP_MYCMD</name>
<accession>Q4PBS8</accession>
<accession>A0A0D1E1U7</accession>
<comment type="function">
    <text evidence="1">Cleaves proteins, imported into the mitochondrion, to their mature size. While most mitochondrial precursor proteins are processed to the mature form in one step by mitochondrial processing peptidase (MPP), the sequential cleavage by MIP of an octapeptide after initial processing by MPP is a required step for a subgroup of nuclear-encoded precursor proteins destined for the matrix or the inner membrane (By similarity).</text>
</comment>
<comment type="catalytic activity">
    <reaction>
        <text>Release of an N-terminal octapeptide as second stage of processing of some proteins imported into the mitochondrion.</text>
        <dbReference type="EC" id="3.4.24.59"/>
    </reaction>
</comment>
<comment type="cofactor">
    <cofactor evidence="1">
        <name>Zn(2+)</name>
        <dbReference type="ChEBI" id="CHEBI:29105"/>
    </cofactor>
    <text evidence="1">Binds 1 zinc ion.</text>
</comment>
<comment type="subcellular location">
    <subcellularLocation>
        <location evidence="1">Mitochondrion matrix</location>
    </subcellularLocation>
</comment>
<comment type="similarity">
    <text evidence="5">Belongs to the peptidase M3 family.</text>
</comment>
<organism>
    <name type="scientific">Mycosarcoma maydis</name>
    <name type="common">Corn smut fungus</name>
    <name type="synonym">Ustilago maydis</name>
    <dbReference type="NCBI Taxonomy" id="5270"/>
    <lineage>
        <taxon>Eukaryota</taxon>
        <taxon>Fungi</taxon>
        <taxon>Dikarya</taxon>
        <taxon>Basidiomycota</taxon>
        <taxon>Ustilaginomycotina</taxon>
        <taxon>Ustilaginomycetes</taxon>
        <taxon>Ustilaginales</taxon>
        <taxon>Ustilaginaceae</taxon>
        <taxon>Mycosarcoma</taxon>
    </lineage>
</organism>